<accession>Q6G9H0</accession>
<protein>
    <recommendedName>
        <fullName>Conserved virulence factor B</fullName>
    </recommendedName>
</protein>
<organism>
    <name type="scientific">Staphylococcus aureus (strain MSSA476)</name>
    <dbReference type="NCBI Taxonomy" id="282459"/>
    <lineage>
        <taxon>Bacteria</taxon>
        <taxon>Bacillati</taxon>
        <taxon>Bacillota</taxon>
        <taxon>Bacilli</taxon>
        <taxon>Bacillales</taxon>
        <taxon>Staphylococcaceae</taxon>
        <taxon>Staphylococcus</taxon>
    </lineage>
</organism>
<reference key="1">
    <citation type="journal article" date="2004" name="Proc. Natl. Acad. Sci. U.S.A.">
        <title>Complete genomes of two clinical Staphylococcus aureus strains: evidence for the rapid evolution of virulence and drug resistance.</title>
        <authorList>
            <person name="Holden M.T.G."/>
            <person name="Feil E.J."/>
            <person name="Lindsay J.A."/>
            <person name="Peacock S.J."/>
            <person name="Day N.P.J."/>
            <person name="Enright M.C."/>
            <person name="Foster T.J."/>
            <person name="Moore C.E."/>
            <person name="Hurst L."/>
            <person name="Atkin R."/>
            <person name="Barron A."/>
            <person name="Bason N."/>
            <person name="Bentley S.D."/>
            <person name="Chillingworth C."/>
            <person name="Chillingworth T."/>
            <person name="Churcher C."/>
            <person name="Clark L."/>
            <person name="Corton C."/>
            <person name="Cronin A."/>
            <person name="Doggett J."/>
            <person name="Dowd L."/>
            <person name="Feltwell T."/>
            <person name="Hance Z."/>
            <person name="Harris B."/>
            <person name="Hauser H."/>
            <person name="Holroyd S."/>
            <person name="Jagels K."/>
            <person name="James K.D."/>
            <person name="Lennard N."/>
            <person name="Line A."/>
            <person name="Mayes R."/>
            <person name="Moule S."/>
            <person name="Mungall K."/>
            <person name="Ormond D."/>
            <person name="Quail M.A."/>
            <person name="Rabbinowitsch E."/>
            <person name="Rutherford K.M."/>
            <person name="Sanders M."/>
            <person name="Sharp S."/>
            <person name="Simmonds M."/>
            <person name="Stevens K."/>
            <person name="Whitehead S."/>
            <person name="Barrell B.G."/>
            <person name="Spratt B.G."/>
            <person name="Parkhill J."/>
        </authorList>
    </citation>
    <scope>NUCLEOTIDE SEQUENCE [LARGE SCALE GENOMIC DNA]</scope>
    <source>
        <strain>MSSA476</strain>
    </source>
</reference>
<keyword id="KW-0843">Virulence</keyword>
<proteinExistence type="inferred from homology"/>
<comment type="function">
    <text evidence="1">Contributes to the expression of virulence factors and to pathogenicity. Involved in the production of hemolysin, DNase, protease and protein A (By similarity).</text>
</comment>
<comment type="similarity">
    <text evidence="2">Belongs to the CvfB family.</text>
</comment>
<dbReference type="EMBL" id="BX571857">
    <property type="protein sequence ID" value="CAG43108.1"/>
    <property type="molecule type" value="Genomic_DNA"/>
</dbReference>
<dbReference type="RefSeq" id="WP_001162354.1">
    <property type="nucleotide sequence ID" value="NC_002953.3"/>
</dbReference>
<dbReference type="SMR" id="Q6G9H0"/>
<dbReference type="KEGG" id="sas:SAS1332"/>
<dbReference type="HOGENOM" id="CLU_064885_0_0_9"/>
<dbReference type="Gene3D" id="2.40.50.140">
    <property type="entry name" value="Nucleic acid-binding proteins"/>
    <property type="match status" value="2"/>
</dbReference>
<dbReference type="Gene3D" id="1.10.10.10">
    <property type="entry name" value="Winged helix-like DNA-binding domain superfamily/Winged helix DNA-binding domain"/>
    <property type="match status" value="1"/>
</dbReference>
<dbReference type="InterPro" id="IPR014464">
    <property type="entry name" value="CvfB_fam"/>
</dbReference>
<dbReference type="InterPro" id="IPR048588">
    <property type="entry name" value="CvfB_S1_2nd"/>
</dbReference>
<dbReference type="InterPro" id="IPR048587">
    <property type="entry name" value="CvfB_S1_3rd"/>
</dbReference>
<dbReference type="InterPro" id="IPR039566">
    <property type="entry name" value="CvfB_S1_st"/>
</dbReference>
<dbReference type="InterPro" id="IPR040764">
    <property type="entry name" value="CvfB_WH"/>
</dbReference>
<dbReference type="InterPro" id="IPR012340">
    <property type="entry name" value="NA-bd_OB-fold"/>
</dbReference>
<dbReference type="InterPro" id="IPR036388">
    <property type="entry name" value="WH-like_DNA-bd_sf"/>
</dbReference>
<dbReference type="PANTHER" id="PTHR37296">
    <property type="entry name" value="CONSERVED VIRULENCE FACTOR B"/>
    <property type="match status" value="1"/>
</dbReference>
<dbReference type="PANTHER" id="PTHR37296:SF1">
    <property type="entry name" value="CONSERVED VIRULENCE FACTOR B"/>
    <property type="match status" value="1"/>
</dbReference>
<dbReference type="Pfam" id="PF21191">
    <property type="entry name" value="CvfB_1st"/>
    <property type="match status" value="1"/>
</dbReference>
<dbReference type="Pfam" id="PF21543">
    <property type="entry name" value="CvfB_2nd"/>
    <property type="match status" value="1"/>
</dbReference>
<dbReference type="Pfam" id="PF17783">
    <property type="entry name" value="CvfB_WH"/>
    <property type="match status" value="1"/>
</dbReference>
<dbReference type="Pfam" id="PF13509">
    <property type="entry name" value="S1_2"/>
    <property type="match status" value="1"/>
</dbReference>
<dbReference type="PIRSF" id="PIRSF012524">
    <property type="entry name" value="YitL_S1"/>
    <property type="match status" value="1"/>
</dbReference>
<sequence length="300" mass="34203">MALDKDIVGSIEFLEVVGLQGSTYLLKGPNGENVKLNQSEMNDDDELEVGEEYSFFIYPNRSGELFATQNMPDITKDKYDFAKVLKTDRDGARIDVGLPREVLVPWEDLPKVKSLWPQPGDHLLVTLRIDRENHMYGRLASESVVENMFTPVHDDNLKNEVIEAKPYRVLRIGSFLLSESGYKIFVHESERKAEPRLGESVQVRIIGHNDKGELNGSFLPLAHERLDDDGQVIFDLLVEYDGELPFWDKSSPEAIKEVFNMSKGSFKRAIGHLYKQKIINIETGKITLTKKGWSRMDSKE</sequence>
<evidence type="ECO:0000250" key="1"/>
<evidence type="ECO:0000305" key="2"/>
<gene>
    <name type="primary">cvfB</name>
    <name type="ordered locus">SAS1332</name>
</gene>
<name>CVFB_STAAS</name>
<feature type="chain" id="PRO_0000282292" description="Conserved virulence factor B">
    <location>
        <begin position="1"/>
        <end position="300"/>
    </location>
</feature>